<comment type="catalytic activity">
    <reaction evidence="1">
        <text>2-formamido-N(1)-(5-O-phospho-beta-D-ribosyl)acetamidine + ATP = 5-amino-1-(5-phospho-beta-D-ribosyl)imidazole + ADP + phosphate + H(+)</text>
        <dbReference type="Rhea" id="RHEA:23032"/>
        <dbReference type="ChEBI" id="CHEBI:15378"/>
        <dbReference type="ChEBI" id="CHEBI:30616"/>
        <dbReference type="ChEBI" id="CHEBI:43474"/>
        <dbReference type="ChEBI" id="CHEBI:137981"/>
        <dbReference type="ChEBI" id="CHEBI:147287"/>
        <dbReference type="ChEBI" id="CHEBI:456216"/>
        <dbReference type="EC" id="6.3.3.1"/>
    </reaction>
</comment>
<comment type="pathway">
    <text evidence="1">Purine metabolism; IMP biosynthesis via de novo pathway; 5-amino-1-(5-phospho-D-ribosyl)imidazole from N(2)-formyl-N(1)-(5-phospho-D-ribosyl)glycinamide: step 2/2.</text>
</comment>
<comment type="subcellular location">
    <subcellularLocation>
        <location evidence="1">Cytoplasm</location>
    </subcellularLocation>
</comment>
<comment type="similarity">
    <text evidence="1">Belongs to the AIR synthase family.</text>
</comment>
<feature type="chain" id="PRO_1000072816" description="Phosphoribosylformylglycinamidine cyclo-ligase">
    <location>
        <begin position="1"/>
        <end position="342"/>
    </location>
</feature>
<gene>
    <name evidence="1" type="primary">purM</name>
    <name type="ordered locus">NWMN_0939</name>
</gene>
<sequence length="342" mass="37017">MSKAYEQSGVNIHAGYEAVERMSSHVKRTMRKEVIGGLGGFGATFDLSQLNMTAPVLVSGTDGVGTKLKLAIDYGKHDSIGIDAVAMCVNDILTTGAEPLYFLDYIATNKVVPEVIEQIVKGISDACVETNTALIGGETAEMGEMYHEGEYDVAGFAVGAVEKDDYVDGSEVKEGQVVIGLASSGIHSNGYSLVRKLINESGIDLASNFDNRPFIDVFLEPTKLYVKPVLALKKEVSIKAMNHITGGGFYENIPRALPAGYAARIDTTSFPTPKIFDWLQQQGNIDTNEMYNIFNMGIGYTVIVDEKDVSRALKILAEQNVEAYQIGHIVKNESTAIELLGV</sequence>
<organism>
    <name type="scientific">Staphylococcus aureus (strain Newman)</name>
    <dbReference type="NCBI Taxonomy" id="426430"/>
    <lineage>
        <taxon>Bacteria</taxon>
        <taxon>Bacillati</taxon>
        <taxon>Bacillota</taxon>
        <taxon>Bacilli</taxon>
        <taxon>Bacillales</taxon>
        <taxon>Staphylococcaceae</taxon>
        <taxon>Staphylococcus</taxon>
    </lineage>
</organism>
<evidence type="ECO:0000255" key="1">
    <source>
        <dbReference type="HAMAP-Rule" id="MF_00741"/>
    </source>
</evidence>
<protein>
    <recommendedName>
        <fullName evidence="1">Phosphoribosylformylglycinamidine cyclo-ligase</fullName>
        <ecNumber evidence="1">6.3.3.1</ecNumber>
    </recommendedName>
    <alternativeName>
        <fullName evidence="1">AIR synthase</fullName>
    </alternativeName>
    <alternativeName>
        <fullName evidence="1">AIRS</fullName>
    </alternativeName>
    <alternativeName>
        <fullName evidence="1">Phosphoribosyl-aminoimidazole synthetase</fullName>
    </alternativeName>
</protein>
<name>PUR5_STAAE</name>
<accession>A6QFS9</accession>
<reference key="1">
    <citation type="journal article" date="2008" name="J. Bacteriol.">
        <title>Genome sequence of Staphylococcus aureus strain Newman and comparative analysis of staphylococcal genomes: polymorphism and evolution of two major pathogenicity islands.</title>
        <authorList>
            <person name="Baba T."/>
            <person name="Bae T."/>
            <person name="Schneewind O."/>
            <person name="Takeuchi F."/>
            <person name="Hiramatsu K."/>
        </authorList>
    </citation>
    <scope>NUCLEOTIDE SEQUENCE [LARGE SCALE GENOMIC DNA]</scope>
    <source>
        <strain>Newman</strain>
    </source>
</reference>
<dbReference type="EC" id="6.3.3.1" evidence="1"/>
<dbReference type="EMBL" id="AP009351">
    <property type="protein sequence ID" value="BAF67211.1"/>
    <property type="molecule type" value="Genomic_DNA"/>
</dbReference>
<dbReference type="RefSeq" id="WP_000030812.1">
    <property type="nucleotide sequence ID" value="NZ_JBBIAE010000002.1"/>
</dbReference>
<dbReference type="SMR" id="A6QFS9"/>
<dbReference type="KEGG" id="sae:NWMN_0939"/>
<dbReference type="HOGENOM" id="CLU_047116_0_0_9"/>
<dbReference type="UniPathway" id="UPA00074">
    <property type="reaction ID" value="UER00129"/>
</dbReference>
<dbReference type="Proteomes" id="UP000006386">
    <property type="component" value="Chromosome"/>
</dbReference>
<dbReference type="GO" id="GO:0005829">
    <property type="term" value="C:cytosol"/>
    <property type="evidence" value="ECO:0007669"/>
    <property type="project" value="TreeGrafter"/>
</dbReference>
<dbReference type="GO" id="GO:0005524">
    <property type="term" value="F:ATP binding"/>
    <property type="evidence" value="ECO:0007669"/>
    <property type="project" value="UniProtKB-KW"/>
</dbReference>
<dbReference type="GO" id="GO:0004637">
    <property type="term" value="F:phosphoribosylamine-glycine ligase activity"/>
    <property type="evidence" value="ECO:0007669"/>
    <property type="project" value="TreeGrafter"/>
</dbReference>
<dbReference type="GO" id="GO:0004641">
    <property type="term" value="F:phosphoribosylformylglycinamidine cyclo-ligase activity"/>
    <property type="evidence" value="ECO:0007669"/>
    <property type="project" value="UniProtKB-UniRule"/>
</dbReference>
<dbReference type="GO" id="GO:0006189">
    <property type="term" value="P:'de novo' IMP biosynthetic process"/>
    <property type="evidence" value="ECO:0007669"/>
    <property type="project" value="UniProtKB-UniRule"/>
</dbReference>
<dbReference type="GO" id="GO:0046084">
    <property type="term" value="P:adenine biosynthetic process"/>
    <property type="evidence" value="ECO:0007669"/>
    <property type="project" value="TreeGrafter"/>
</dbReference>
<dbReference type="CDD" id="cd02196">
    <property type="entry name" value="PurM"/>
    <property type="match status" value="1"/>
</dbReference>
<dbReference type="FunFam" id="3.30.1330.10:FF:000001">
    <property type="entry name" value="Phosphoribosylformylglycinamidine cyclo-ligase"/>
    <property type="match status" value="1"/>
</dbReference>
<dbReference type="FunFam" id="3.90.650.10:FF:000001">
    <property type="entry name" value="Phosphoribosylformylglycinamidine cyclo-ligase"/>
    <property type="match status" value="1"/>
</dbReference>
<dbReference type="Gene3D" id="3.90.650.10">
    <property type="entry name" value="PurM-like C-terminal domain"/>
    <property type="match status" value="1"/>
</dbReference>
<dbReference type="Gene3D" id="3.30.1330.10">
    <property type="entry name" value="PurM-like, N-terminal domain"/>
    <property type="match status" value="1"/>
</dbReference>
<dbReference type="HAMAP" id="MF_00741">
    <property type="entry name" value="AIRS"/>
    <property type="match status" value="1"/>
</dbReference>
<dbReference type="InterPro" id="IPR010918">
    <property type="entry name" value="PurM-like_C_dom"/>
</dbReference>
<dbReference type="InterPro" id="IPR036676">
    <property type="entry name" value="PurM-like_C_sf"/>
</dbReference>
<dbReference type="InterPro" id="IPR016188">
    <property type="entry name" value="PurM-like_N"/>
</dbReference>
<dbReference type="InterPro" id="IPR036921">
    <property type="entry name" value="PurM-like_N_sf"/>
</dbReference>
<dbReference type="InterPro" id="IPR004733">
    <property type="entry name" value="PurM_cligase"/>
</dbReference>
<dbReference type="NCBIfam" id="TIGR00878">
    <property type="entry name" value="purM"/>
    <property type="match status" value="1"/>
</dbReference>
<dbReference type="PANTHER" id="PTHR10520:SF12">
    <property type="entry name" value="TRIFUNCTIONAL PURINE BIOSYNTHETIC PROTEIN ADENOSINE-3"/>
    <property type="match status" value="1"/>
</dbReference>
<dbReference type="PANTHER" id="PTHR10520">
    <property type="entry name" value="TRIFUNCTIONAL PURINE BIOSYNTHETIC PROTEIN ADENOSINE-3-RELATED"/>
    <property type="match status" value="1"/>
</dbReference>
<dbReference type="Pfam" id="PF00586">
    <property type="entry name" value="AIRS"/>
    <property type="match status" value="1"/>
</dbReference>
<dbReference type="Pfam" id="PF02769">
    <property type="entry name" value="AIRS_C"/>
    <property type="match status" value="1"/>
</dbReference>
<dbReference type="SUPFAM" id="SSF56042">
    <property type="entry name" value="PurM C-terminal domain-like"/>
    <property type="match status" value="1"/>
</dbReference>
<dbReference type="SUPFAM" id="SSF55326">
    <property type="entry name" value="PurM N-terminal domain-like"/>
    <property type="match status" value="1"/>
</dbReference>
<keyword id="KW-0067">ATP-binding</keyword>
<keyword id="KW-0963">Cytoplasm</keyword>
<keyword id="KW-0436">Ligase</keyword>
<keyword id="KW-0547">Nucleotide-binding</keyword>
<keyword id="KW-0658">Purine biosynthesis</keyword>
<proteinExistence type="inferred from homology"/>